<evidence type="ECO:0000250" key="1"/>
<evidence type="ECO:0000255" key="2"/>
<evidence type="ECO:0000255" key="3">
    <source>
        <dbReference type="PROSITE-ProRule" id="PRU10009"/>
    </source>
</evidence>
<evidence type="ECO:0000305" key="4"/>
<proteinExistence type="evidence at transcript level"/>
<sequence length="416" mass="44338">MAFVAPVSSVFSTSSKSAVCSGRSSFAQFSGLKKVNNTARLQTAEQGSAFGGVSDANDAFFNAVNTMGAPARTSNAPSMKVRVAINGFGRIGRNFIRCWAGRTDSNMDVVCINDTSGVKTASHLLKYDSILGTFDSDVVAGEDSITVDGKTIKVVSNRNPLELPWKEMEIDIVVEATGVFVDAVGAGKHIQAGAKKVLITAPGKGEGVGTFVVGVNDHLYSHDKFDIVSNASCTTNCMAPFMKVLDDEFGVVRGMMTTTHSYTGDQRLLDAGHRDLRRARSAALNIVPTTTGAAKAVALVVPTLAGKLNGIALRVPTPNVSVCDVVMQVSKKTFKEEVNGALLKAANGSMKGIIKYSDEPLVSCDYRGTDESTIIDSSLTMVMGDDMLKVVAWYDNEWGYSQRVVDLGEVMASQWK</sequence>
<accession>P30724</accession>
<protein>
    <recommendedName>
        <fullName>Glyceraldehyde-3-phosphate dehydrogenase, chloroplastic</fullName>
        <ecNumber>1.2.1.13</ecNumber>
    </recommendedName>
    <alternativeName>
        <fullName>NADP-dependent glyceraldehydephosphate dehydrogenase</fullName>
    </alternativeName>
</protein>
<feature type="transit peptide" description="Chloroplast" evidence="2">
    <location>
        <begin position="1"/>
        <end position="78"/>
    </location>
</feature>
<feature type="chain" id="PRO_0000010420" description="Glyceraldehyde-3-phosphate dehydrogenase, chloroplastic">
    <location>
        <begin position="79"/>
        <end position="416"/>
    </location>
</feature>
<feature type="active site" description="Nucleophile" evidence="3">
    <location>
        <position position="233"/>
    </location>
</feature>
<feature type="binding site" evidence="1">
    <location>
        <begin position="90"/>
        <end position="91"/>
    </location>
    <ligand>
        <name>NADP(+)</name>
        <dbReference type="ChEBI" id="CHEBI:58349"/>
    </ligand>
</feature>
<feature type="binding site" evidence="1">
    <location>
        <position position="114"/>
    </location>
    <ligand>
        <name>NADP(+)</name>
        <dbReference type="ChEBI" id="CHEBI:58349"/>
    </ligand>
</feature>
<feature type="binding site" evidence="1">
    <location>
        <position position="158"/>
    </location>
    <ligand>
        <name>NADP(+)</name>
        <dbReference type="ChEBI" id="CHEBI:58349"/>
    </ligand>
</feature>
<feature type="binding site" evidence="1">
    <location>
        <begin position="232"/>
        <end position="234"/>
    </location>
    <ligand>
        <name>D-glyceraldehyde 3-phosphate</name>
        <dbReference type="ChEBI" id="CHEBI:59776"/>
    </ligand>
</feature>
<feature type="binding site" evidence="1">
    <location>
        <position position="263"/>
    </location>
    <ligand>
        <name>D-glyceraldehyde 3-phosphate</name>
        <dbReference type="ChEBI" id="CHEBI:59776"/>
    </ligand>
</feature>
<feature type="binding site" evidence="1">
    <location>
        <position position="278"/>
    </location>
    <ligand>
        <name>D-glyceraldehyde 3-phosphate</name>
        <dbReference type="ChEBI" id="CHEBI:59776"/>
    </ligand>
</feature>
<feature type="binding site" evidence="1">
    <location>
        <begin position="291"/>
        <end position="292"/>
    </location>
    <ligand>
        <name>D-glyceraldehyde 3-phosphate</name>
        <dbReference type="ChEBI" id="CHEBI:59776"/>
    </ligand>
</feature>
<feature type="binding site" evidence="1">
    <location>
        <position position="314"/>
    </location>
    <ligand>
        <name>D-glyceraldehyde 3-phosphate</name>
        <dbReference type="ChEBI" id="CHEBI:59776"/>
    </ligand>
</feature>
<feature type="binding site" evidence="1">
    <location>
        <position position="396"/>
    </location>
    <ligand>
        <name>NADP(+)</name>
        <dbReference type="ChEBI" id="CHEBI:58349"/>
    </ligand>
</feature>
<feature type="site" description="Activates thiol group during catalysis" evidence="1">
    <location>
        <position position="260"/>
    </location>
</feature>
<gene>
    <name type="primary">GAPA</name>
</gene>
<comment type="catalytic activity">
    <reaction>
        <text>D-glyceraldehyde 3-phosphate + phosphate + NADP(+) = (2R)-3-phospho-glyceroyl phosphate + NADPH + H(+)</text>
        <dbReference type="Rhea" id="RHEA:10296"/>
        <dbReference type="ChEBI" id="CHEBI:15378"/>
        <dbReference type="ChEBI" id="CHEBI:43474"/>
        <dbReference type="ChEBI" id="CHEBI:57604"/>
        <dbReference type="ChEBI" id="CHEBI:57783"/>
        <dbReference type="ChEBI" id="CHEBI:58349"/>
        <dbReference type="ChEBI" id="CHEBI:59776"/>
        <dbReference type="EC" id="1.2.1.13"/>
    </reaction>
</comment>
<comment type="pathway">
    <text>Carbohydrate biosynthesis; Calvin cycle.</text>
</comment>
<comment type="subunit">
    <text evidence="1">Homotetramer.</text>
</comment>
<comment type="subcellular location">
    <subcellularLocation>
        <location>Plastid</location>
        <location>Chloroplast</location>
    </subcellularLocation>
</comment>
<comment type="similarity">
    <text evidence="4">Belongs to the glyceraldehyde-3-phosphate dehydrogenase family.</text>
</comment>
<keyword id="KW-0113">Calvin cycle</keyword>
<keyword id="KW-0150">Chloroplast</keyword>
<keyword id="KW-0521">NADP</keyword>
<keyword id="KW-0560">Oxidoreductase</keyword>
<keyword id="KW-0934">Plastid</keyword>
<keyword id="KW-0809">Transit peptide</keyword>
<reference key="1">
    <citation type="journal article" date="1993" name="Curr. Genet.">
        <title>cDNA cloning and characterization of the nuclear gene encoding chloroplast glyceraldehyde-3-phosphate dehydrogenase from the marine red alga Gracilaria verrucosa.</title>
        <authorList>
            <person name="Zhou Y.H."/>
            <person name="Ragan M.A."/>
        </authorList>
    </citation>
    <scope>NUCLEOTIDE SEQUENCE [MRNA]</scope>
    <source>
        <strain>Norway</strain>
    </source>
</reference>
<reference key="2">
    <citation type="journal article" date="1994" name="Curr. Genet.">
        <title>Cloning and characterization of the nuclear gene encoding plastid glyceraldehyde-3-phosphate dehydrogenase from the marine red alga Gracilaria verrucosa.</title>
        <authorList>
            <person name="Zhou Y.H."/>
            <person name="Ragan M.A."/>
        </authorList>
    </citation>
    <scope>SEQUENCE REVISION</scope>
</reference>
<name>G3PA_GRAGA</name>
<organism>
    <name type="scientific">Gracilaria gracilis</name>
    <name type="common">Red alga</name>
    <dbReference type="NCBI Taxonomy" id="2777"/>
    <lineage>
        <taxon>Eukaryota</taxon>
        <taxon>Rhodophyta</taxon>
        <taxon>Florideophyceae</taxon>
        <taxon>Rhodymeniophycidae</taxon>
        <taxon>Gracilariales</taxon>
        <taxon>Gracilariaceae</taxon>
        <taxon>Gracilaria</taxon>
    </lineage>
</organism>
<dbReference type="EC" id="1.2.1.13"/>
<dbReference type="EMBL" id="Z15102">
    <property type="protein sequence ID" value="CAA78811.1"/>
    <property type="molecule type" value="mRNA"/>
</dbReference>
<dbReference type="EMBL" id="L22011">
    <property type="protein sequence ID" value="AAA33355.1"/>
    <property type="molecule type" value="Genomic_DNA"/>
</dbReference>
<dbReference type="PIR" id="S45484">
    <property type="entry name" value="S45484"/>
</dbReference>
<dbReference type="SMR" id="P30724"/>
<dbReference type="UniPathway" id="UPA00116"/>
<dbReference type="GO" id="GO:0009507">
    <property type="term" value="C:chloroplast"/>
    <property type="evidence" value="ECO:0007669"/>
    <property type="project" value="UniProtKB-SubCell"/>
</dbReference>
<dbReference type="GO" id="GO:0047100">
    <property type="term" value="F:glyceraldehyde-3-phosphate dehydrogenase (NADP+) (phosphorylating) activity"/>
    <property type="evidence" value="ECO:0007669"/>
    <property type="project" value="UniProtKB-EC"/>
</dbReference>
<dbReference type="GO" id="GO:0051287">
    <property type="term" value="F:NAD binding"/>
    <property type="evidence" value="ECO:0007669"/>
    <property type="project" value="InterPro"/>
</dbReference>
<dbReference type="GO" id="GO:0050661">
    <property type="term" value="F:NADP binding"/>
    <property type="evidence" value="ECO:0007669"/>
    <property type="project" value="InterPro"/>
</dbReference>
<dbReference type="GO" id="GO:0006006">
    <property type="term" value="P:glucose metabolic process"/>
    <property type="evidence" value="ECO:0007669"/>
    <property type="project" value="InterPro"/>
</dbReference>
<dbReference type="GO" id="GO:0019253">
    <property type="term" value="P:reductive pentose-phosphate cycle"/>
    <property type="evidence" value="ECO:0007669"/>
    <property type="project" value="UniProtKB-UniPathway"/>
</dbReference>
<dbReference type="CDD" id="cd18126">
    <property type="entry name" value="GAPDH_I_C"/>
    <property type="match status" value="1"/>
</dbReference>
<dbReference type="CDD" id="cd05214">
    <property type="entry name" value="GAPDH_I_N"/>
    <property type="match status" value="1"/>
</dbReference>
<dbReference type="FunFam" id="3.30.360.10:FF:000002">
    <property type="entry name" value="Glyceraldehyde-3-phosphate dehydrogenase"/>
    <property type="match status" value="1"/>
</dbReference>
<dbReference type="FunFam" id="3.40.50.720:FF:000001">
    <property type="entry name" value="Glyceraldehyde-3-phosphate dehydrogenase"/>
    <property type="match status" value="1"/>
</dbReference>
<dbReference type="Gene3D" id="3.30.360.10">
    <property type="entry name" value="Dihydrodipicolinate Reductase, domain 2"/>
    <property type="match status" value="1"/>
</dbReference>
<dbReference type="Gene3D" id="3.40.50.720">
    <property type="entry name" value="NAD(P)-binding Rossmann-like Domain"/>
    <property type="match status" value="1"/>
</dbReference>
<dbReference type="InterPro" id="IPR020831">
    <property type="entry name" value="GlycerAld/Erythrose_P_DH"/>
</dbReference>
<dbReference type="InterPro" id="IPR020830">
    <property type="entry name" value="GlycerAld_3-P_DH_AS"/>
</dbReference>
<dbReference type="InterPro" id="IPR020829">
    <property type="entry name" value="GlycerAld_3-P_DH_cat"/>
</dbReference>
<dbReference type="InterPro" id="IPR020828">
    <property type="entry name" value="GlycerAld_3-P_DH_NAD(P)-bd"/>
</dbReference>
<dbReference type="InterPro" id="IPR006424">
    <property type="entry name" value="Glyceraldehyde-3-P_DH_1"/>
</dbReference>
<dbReference type="InterPro" id="IPR036291">
    <property type="entry name" value="NAD(P)-bd_dom_sf"/>
</dbReference>
<dbReference type="NCBIfam" id="TIGR01534">
    <property type="entry name" value="GAPDH-I"/>
    <property type="match status" value="1"/>
</dbReference>
<dbReference type="PANTHER" id="PTHR43148">
    <property type="entry name" value="GLYCERALDEHYDE-3-PHOSPHATE DEHYDROGENASE 2"/>
    <property type="match status" value="1"/>
</dbReference>
<dbReference type="Pfam" id="PF02800">
    <property type="entry name" value="Gp_dh_C"/>
    <property type="match status" value="1"/>
</dbReference>
<dbReference type="Pfam" id="PF00044">
    <property type="entry name" value="Gp_dh_N"/>
    <property type="match status" value="1"/>
</dbReference>
<dbReference type="PRINTS" id="PR00078">
    <property type="entry name" value="G3PDHDRGNASE"/>
</dbReference>
<dbReference type="SMART" id="SM00846">
    <property type="entry name" value="Gp_dh_N"/>
    <property type="match status" value="1"/>
</dbReference>
<dbReference type="SUPFAM" id="SSF55347">
    <property type="entry name" value="Glyceraldehyde-3-phosphate dehydrogenase-like, C-terminal domain"/>
    <property type="match status" value="1"/>
</dbReference>
<dbReference type="SUPFAM" id="SSF51735">
    <property type="entry name" value="NAD(P)-binding Rossmann-fold domains"/>
    <property type="match status" value="1"/>
</dbReference>
<dbReference type="PROSITE" id="PS00071">
    <property type="entry name" value="GAPDH"/>
    <property type="match status" value="1"/>
</dbReference>